<keyword id="KW-0067">ATP-binding</keyword>
<keyword id="KW-0436">Ligase</keyword>
<keyword id="KW-0460">Magnesium</keyword>
<keyword id="KW-0479">Metal-binding</keyword>
<keyword id="KW-0547">Nucleotide-binding</keyword>
<keyword id="KW-0658">Purine biosynthesis</keyword>
<reference key="1">
    <citation type="journal article" date="2005" name="J. Bacteriol.">
        <title>Whole-genome sequence analysis of Pseudomonas syringae pv. phaseolicola 1448A reveals divergence among pathovars in genes involved in virulence and transposition.</title>
        <authorList>
            <person name="Joardar V."/>
            <person name="Lindeberg M."/>
            <person name="Jackson R.W."/>
            <person name="Selengut J."/>
            <person name="Dodson R."/>
            <person name="Brinkac L.M."/>
            <person name="Daugherty S.C."/>
            <person name="DeBoy R.T."/>
            <person name="Durkin A.S."/>
            <person name="Gwinn Giglio M."/>
            <person name="Madupu R."/>
            <person name="Nelson W.C."/>
            <person name="Rosovitz M.J."/>
            <person name="Sullivan S.A."/>
            <person name="Crabtree J."/>
            <person name="Creasy T."/>
            <person name="Davidsen T.M."/>
            <person name="Haft D.H."/>
            <person name="Zafar N."/>
            <person name="Zhou L."/>
            <person name="Halpin R."/>
            <person name="Holley T."/>
            <person name="Khouri H.M."/>
            <person name="Feldblyum T.V."/>
            <person name="White O."/>
            <person name="Fraser C.M."/>
            <person name="Chatterjee A.K."/>
            <person name="Cartinhour S."/>
            <person name="Schneider D."/>
            <person name="Mansfield J.W."/>
            <person name="Collmer A."/>
            <person name="Buell R."/>
        </authorList>
    </citation>
    <scope>NUCLEOTIDE SEQUENCE [LARGE SCALE GENOMIC DNA]</scope>
    <source>
        <strain>1448A / Race 6</strain>
    </source>
</reference>
<feature type="chain" id="PRO_0000319215" description="Formate-dependent phosphoribosylglycinamide formyltransferase">
    <location>
        <begin position="1"/>
        <end position="393"/>
    </location>
</feature>
<feature type="domain" description="ATP-grasp" evidence="1">
    <location>
        <begin position="119"/>
        <end position="308"/>
    </location>
</feature>
<feature type="binding site" evidence="1">
    <location>
        <begin position="22"/>
        <end position="23"/>
    </location>
    <ligand>
        <name>N(1)-(5-phospho-beta-D-ribosyl)glycinamide</name>
        <dbReference type="ChEBI" id="CHEBI:143788"/>
    </ligand>
</feature>
<feature type="binding site" evidence="1">
    <location>
        <position position="82"/>
    </location>
    <ligand>
        <name>N(1)-(5-phospho-beta-D-ribosyl)glycinamide</name>
        <dbReference type="ChEBI" id="CHEBI:143788"/>
    </ligand>
</feature>
<feature type="binding site" evidence="1">
    <location>
        <position position="114"/>
    </location>
    <ligand>
        <name>ATP</name>
        <dbReference type="ChEBI" id="CHEBI:30616"/>
    </ligand>
</feature>
<feature type="binding site" evidence="1">
    <location>
        <position position="155"/>
    </location>
    <ligand>
        <name>ATP</name>
        <dbReference type="ChEBI" id="CHEBI:30616"/>
    </ligand>
</feature>
<feature type="binding site" evidence="1">
    <location>
        <begin position="160"/>
        <end position="165"/>
    </location>
    <ligand>
        <name>ATP</name>
        <dbReference type="ChEBI" id="CHEBI:30616"/>
    </ligand>
</feature>
<feature type="binding site" evidence="1">
    <location>
        <begin position="195"/>
        <end position="198"/>
    </location>
    <ligand>
        <name>ATP</name>
        <dbReference type="ChEBI" id="CHEBI:30616"/>
    </ligand>
</feature>
<feature type="binding site" evidence="1">
    <location>
        <position position="203"/>
    </location>
    <ligand>
        <name>ATP</name>
        <dbReference type="ChEBI" id="CHEBI:30616"/>
    </ligand>
</feature>
<feature type="binding site" evidence="1">
    <location>
        <position position="267"/>
    </location>
    <ligand>
        <name>Mg(2+)</name>
        <dbReference type="ChEBI" id="CHEBI:18420"/>
    </ligand>
</feature>
<feature type="binding site" evidence="1">
    <location>
        <position position="279"/>
    </location>
    <ligand>
        <name>Mg(2+)</name>
        <dbReference type="ChEBI" id="CHEBI:18420"/>
    </ligand>
</feature>
<feature type="binding site" evidence="1">
    <location>
        <position position="286"/>
    </location>
    <ligand>
        <name>N(1)-(5-phospho-beta-D-ribosyl)glycinamide</name>
        <dbReference type="ChEBI" id="CHEBI:143788"/>
    </ligand>
</feature>
<feature type="binding site" evidence="1">
    <location>
        <position position="356"/>
    </location>
    <ligand>
        <name>N(1)-(5-phospho-beta-D-ribosyl)glycinamide</name>
        <dbReference type="ChEBI" id="CHEBI:143788"/>
    </ligand>
</feature>
<feature type="binding site" evidence="1">
    <location>
        <begin position="363"/>
        <end position="364"/>
    </location>
    <ligand>
        <name>N(1)-(5-phospho-beta-D-ribosyl)glycinamide</name>
        <dbReference type="ChEBI" id="CHEBI:143788"/>
    </ligand>
</feature>
<accession>Q48LW5</accession>
<protein>
    <recommendedName>
        <fullName evidence="1">Formate-dependent phosphoribosylglycinamide formyltransferase</fullName>
        <ecNumber evidence="1">6.3.1.21</ecNumber>
    </recommendedName>
    <alternativeName>
        <fullName evidence="1">5'-phosphoribosylglycinamide transformylase 2</fullName>
    </alternativeName>
    <alternativeName>
        <fullName evidence="1">Formate-dependent GAR transformylase</fullName>
    </alternativeName>
    <alternativeName>
        <fullName evidence="1">GAR transformylase 2</fullName>
        <shortName evidence="1">GART 2</shortName>
    </alternativeName>
    <alternativeName>
        <fullName evidence="1">Non-folate glycinamide ribonucleotide transformylase</fullName>
    </alternativeName>
    <alternativeName>
        <fullName evidence="1">Phosphoribosylglycinamide formyltransferase 2</fullName>
    </alternativeName>
</protein>
<evidence type="ECO:0000255" key="1">
    <source>
        <dbReference type="HAMAP-Rule" id="MF_01643"/>
    </source>
</evidence>
<dbReference type="EC" id="6.3.1.21" evidence="1"/>
<dbReference type="EMBL" id="CP000058">
    <property type="protein sequence ID" value="AAZ34996.1"/>
    <property type="molecule type" value="Genomic_DNA"/>
</dbReference>
<dbReference type="RefSeq" id="WP_002552516.1">
    <property type="nucleotide sequence ID" value="NC_005773.3"/>
</dbReference>
<dbReference type="SMR" id="Q48LW5"/>
<dbReference type="KEGG" id="psp:PSPPH_1349"/>
<dbReference type="eggNOG" id="COG0027">
    <property type="taxonomic scope" value="Bacteria"/>
</dbReference>
<dbReference type="HOGENOM" id="CLU_011534_1_3_6"/>
<dbReference type="UniPathway" id="UPA00074">
    <property type="reaction ID" value="UER00127"/>
</dbReference>
<dbReference type="Proteomes" id="UP000000551">
    <property type="component" value="Chromosome"/>
</dbReference>
<dbReference type="GO" id="GO:0005829">
    <property type="term" value="C:cytosol"/>
    <property type="evidence" value="ECO:0007669"/>
    <property type="project" value="TreeGrafter"/>
</dbReference>
<dbReference type="GO" id="GO:0005524">
    <property type="term" value="F:ATP binding"/>
    <property type="evidence" value="ECO:0007669"/>
    <property type="project" value="UniProtKB-UniRule"/>
</dbReference>
<dbReference type="GO" id="GO:0000287">
    <property type="term" value="F:magnesium ion binding"/>
    <property type="evidence" value="ECO:0007669"/>
    <property type="project" value="InterPro"/>
</dbReference>
<dbReference type="GO" id="GO:0043815">
    <property type="term" value="F:phosphoribosylglycinamide formyltransferase 2 activity"/>
    <property type="evidence" value="ECO:0007669"/>
    <property type="project" value="UniProtKB-UniRule"/>
</dbReference>
<dbReference type="GO" id="GO:0004644">
    <property type="term" value="F:phosphoribosylglycinamide formyltransferase activity"/>
    <property type="evidence" value="ECO:0007669"/>
    <property type="project" value="InterPro"/>
</dbReference>
<dbReference type="GO" id="GO:0006189">
    <property type="term" value="P:'de novo' IMP biosynthetic process"/>
    <property type="evidence" value="ECO:0007669"/>
    <property type="project" value="UniProtKB-UniRule"/>
</dbReference>
<dbReference type="FunFam" id="3.30.1490.20:FF:000013">
    <property type="entry name" value="Formate-dependent phosphoribosylglycinamide formyltransferase"/>
    <property type="match status" value="1"/>
</dbReference>
<dbReference type="FunFam" id="3.30.470.20:FF:000027">
    <property type="entry name" value="Formate-dependent phosphoribosylglycinamide formyltransferase"/>
    <property type="match status" value="1"/>
</dbReference>
<dbReference type="FunFam" id="3.40.50.20:FF:000007">
    <property type="entry name" value="Formate-dependent phosphoribosylglycinamide formyltransferase"/>
    <property type="match status" value="1"/>
</dbReference>
<dbReference type="Gene3D" id="3.40.50.20">
    <property type="match status" value="1"/>
</dbReference>
<dbReference type="Gene3D" id="3.30.1490.20">
    <property type="entry name" value="ATP-grasp fold, A domain"/>
    <property type="match status" value="1"/>
</dbReference>
<dbReference type="Gene3D" id="3.30.470.20">
    <property type="entry name" value="ATP-grasp fold, B domain"/>
    <property type="match status" value="1"/>
</dbReference>
<dbReference type="HAMAP" id="MF_01643">
    <property type="entry name" value="PurT"/>
    <property type="match status" value="1"/>
</dbReference>
<dbReference type="InterPro" id="IPR011761">
    <property type="entry name" value="ATP-grasp"/>
</dbReference>
<dbReference type="InterPro" id="IPR003135">
    <property type="entry name" value="ATP-grasp_carboxylate-amine"/>
</dbReference>
<dbReference type="InterPro" id="IPR013815">
    <property type="entry name" value="ATP_grasp_subdomain_1"/>
</dbReference>
<dbReference type="InterPro" id="IPR016185">
    <property type="entry name" value="PreATP-grasp_dom_sf"/>
</dbReference>
<dbReference type="InterPro" id="IPR005862">
    <property type="entry name" value="PurT"/>
</dbReference>
<dbReference type="InterPro" id="IPR054350">
    <property type="entry name" value="PurT/PurK_preATP-grasp"/>
</dbReference>
<dbReference type="InterPro" id="IPR048740">
    <property type="entry name" value="PurT_C"/>
</dbReference>
<dbReference type="NCBIfam" id="NF006766">
    <property type="entry name" value="PRK09288.1"/>
    <property type="match status" value="1"/>
</dbReference>
<dbReference type="NCBIfam" id="TIGR01142">
    <property type="entry name" value="purT"/>
    <property type="match status" value="1"/>
</dbReference>
<dbReference type="PANTHER" id="PTHR43055">
    <property type="entry name" value="FORMATE-DEPENDENT PHOSPHORIBOSYLGLYCINAMIDE FORMYLTRANSFERASE"/>
    <property type="match status" value="1"/>
</dbReference>
<dbReference type="PANTHER" id="PTHR43055:SF1">
    <property type="entry name" value="FORMATE-DEPENDENT PHOSPHORIBOSYLGLYCINAMIDE FORMYLTRANSFERASE"/>
    <property type="match status" value="1"/>
</dbReference>
<dbReference type="Pfam" id="PF02222">
    <property type="entry name" value="ATP-grasp"/>
    <property type="match status" value="1"/>
</dbReference>
<dbReference type="Pfam" id="PF21244">
    <property type="entry name" value="PurT_C"/>
    <property type="match status" value="1"/>
</dbReference>
<dbReference type="Pfam" id="PF22660">
    <property type="entry name" value="RS_preATP-grasp-like"/>
    <property type="match status" value="1"/>
</dbReference>
<dbReference type="SUPFAM" id="SSF56059">
    <property type="entry name" value="Glutathione synthetase ATP-binding domain-like"/>
    <property type="match status" value="1"/>
</dbReference>
<dbReference type="SUPFAM" id="SSF52440">
    <property type="entry name" value="PreATP-grasp domain"/>
    <property type="match status" value="1"/>
</dbReference>
<dbReference type="PROSITE" id="PS50975">
    <property type="entry name" value="ATP_GRASP"/>
    <property type="match status" value="1"/>
</dbReference>
<proteinExistence type="inferred from homology"/>
<organism>
    <name type="scientific">Pseudomonas savastanoi pv. phaseolicola (strain 1448A / Race 6)</name>
    <name type="common">Pseudomonas syringae pv. phaseolicola (strain 1448A / Race 6)</name>
    <dbReference type="NCBI Taxonomy" id="264730"/>
    <lineage>
        <taxon>Bacteria</taxon>
        <taxon>Pseudomonadati</taxon>
        <taxon>Pseudomonadota</taxon>
        <taxon>Gammaproteobacteria</taxon>
        <taxon>Pseudomonadales</taxon>
        <taxon>Pseudomonadaceae</taxon>
        <taxon>Pseudomonas</taxon>
    </lineage>
</organism>
<name>PURT_PSE14</name>
<comment type="function">
    <text evidence="1">Involved in the de novo purine biosynthesis. Catalyzes the transfer of formate to 5-phospho-ribosyl-glycinamide (GAR), producing 5-phospho-ribosyl-N-formylglycinamide (FGAR). Formate is provided by PurU via hydrolysis of 10-formyl-tetrahydrofolate.</text>
</comment>
<comment type="catalytic activity">
    <reaction evidence="1">
        <text>N(1)-(5-phospho-beta-D-ribosyl)glycinamide + formate + ATP = N(2)-formyl-N(1)-(5-phospho-beta-D-ribosyl)glycinamide + ADP + phosphate + H(+)</text>
        <dbReference type="Rhea" id="RHEA:24829"/>
        <dbReference type="ChEBI" id="CHEBI:15378"/>
        <dbReference type="ChEBI" id="CHEBI:15740"/>
        <dbReference type="ChEBI" id="CHEBI:30616"/>
        <dbReference type="ChEBI" id="CHEBI:43474"/>
        <dbReference type="ChEBI" id="CHEBI:143788"/>
        <dbReference type="ChEBI" id="CHEBI:147286"/>
        <dbReference type="ChEBI" id="CHEBI:456216"/>
        <dbReference type="EC" id="6.3.1.21"/>
    </reaction>
    <physiologicalReaction direction="left-to-right" evidence="1">
        <dbReference type="Rhea" id="RHEA:24830"/>
    </physiologicalReaction>
</comment>
<comment type="pathway">
    <text evidence="1">Purine metabolism; IMP biosynthesis via de novo pathway; N(2)-formyl-N(1)-(5-phospho-D-ribosyl)glycinamide from N(1)-(5-phospho-D-ribosyl)glycinamide (formate route): step 1/1.</text>
</comment>
<comment type="subunit">
    <text evidence="1">Homodimer.</text>
</comment>
<comment type="similarity">
    <text evidence="1">Belongs to the PurK/PurT family.</text>
</comment>
<gene>
    <name evidence="1" type="primary">purT</name>
    <name type="ordered locus">PSPPH_1349</name>
</gene>
<sequence>MTQIGTPLSPTATRVLFCGSGELGKEVVIELQRLGVEVIAVDRYENAPAMQVAHRSHVINMLDGAALRAVIEAEKPDFIVPEIEAIATATLVELEAEGFTVIPTARAAQLTMNREGIRRLAAEELKLPTSPYHFADTFEAYSKAVEDLGFPCVVKPVMSSSGKGQSLLKSADDVQKAWDYAQEGGRAGKGRVIVEGFIDFDYEITLLTVRHIGGTTFCAPVGHRQEKGDYQESWQPQAMSPVALAESERVARAVTEALGGRGMFGVELFIKGDQVWFSEVSPRPHDTGLVTLISQDLSQFALHARAILGLPIPLIRQFGPSASAVILVEGQSTQTAFANLGAALAEPDTALRLFGKPEVNGQRRMGVALARDESIEAARAKATRASQAVDVKL</sequence>